<reference key="1">
    <citation type="journal article" date="1996" name="J. Biol. Chem.">
        <title>Identification of a major protein kinase C-binding protein and substrate in rat embryo fibroblasts. Decreased expression in transformed cells.</title>
        <authorList>
            <person name="Chapline C."/>
            <person name="Mousseau B."/>
            <person name="Ramsay K."/>
            <person name="Duddy S."/>
            <person name="Li Y."/>
            <person name="Kiley S.C."/>
            <person name="Jaken S."/>
        </authorList>
    </citation>
    <scope>NUCLEOTIDE SEQUENCE [MRNA] (ISOFORM 1)</scope>
    <scope>PHOSPHORYLATION</scope>
</reference>
<reference key="2">
    <citation type="journal article" date="2004" name="J. Biol. Chem.">
        <title>Multiple promoters direct expression of three AKAP12 isoforms with distinct subcellular and tissue distribution profiles.</title>
        <authorList>
            <person name="Streb J.W."/>
            <person name="Kitchen C.M."/>
            <person name="Gelman I.H."/>
            <person name="Miano J.M."/>
        </authorList>
    </citation>
    <scope>NUCLEOTIDE SEQUENCE [MRNA] (ISOFORMS 1; 2 AND 3)</scope>
</reference>
<reference key="3">
    <citation type="journal article" date="2005" name="J. Biol. Chem.">
        <title>Cross-species sequence analysis reveals multiple charged residue-rich domains that regulate nuclear/cytoplasmic partitioning and membrane localization of a kinase anchoring protein 12 (SSeCKS/Gravin).</title>
        <authorList>
            <person name="Streb J.W."/>
            <person name="Miano J.M."/>
        </authorList>
    </citation>
    <scope>SUBCELLULAR LOCATION</scope>
</reference>
<reference key="4">
    <citation type="journal article" date="2012" name="Nat. Commun.">
        <title>Quantitative maps of protein phosphorylation sites across 14 different rat organs and tissues.</title>
        <authorList>
            <person name="Lundby A."/>
            <person name="Secher A."/>
            <person name="Lage K."/>
            <person name="Nordsborg N.B."/>
            <person name="Dmytriyev A."/>
            <person name="Lundby C."/>
            <person name="Olsen J.V."/>
        </authorList>
    </citation>
    <scope>PHOSPHORYLATION [LARGE SCALE ANALYSIS] AT SER-11; SER-245; SER-268; SER-271; SER-274; SER-304; THR-331; SER-335; SER-350; SER-469; SER-491; SER-507; SER-509; SER-541; SER-544; SER-585; SER-599; SER-614; THR-629; SER-631; SER-635; SER-638; SER-683; SER-736; SER-770; SER-771; SER-1059; SER-1348; SER-1352; SER-1354 AND SER-1571</scope>
    <scope>IDENTIFICATION BY MASS SPECTROMETRY [LARGE SCALE ANALYSIS]</scope>
</reference>
<feature type="initiator methionine" description="Removed" evidence="2">
    <location>
        <position position="1"/>
    </location>
</feature>
<feature type="chain" id="PRO_0000304942" description="A-kinase anchor protein 12">
    <location>
        <begin position="2"/>
        <end position="1687"/>
    </location>
</feature>
<feature type="region of interest" description="Disordered" evidence="5">
    <location>
        <begin position="1"/>
        <end position="108"/>
    </location>
</feature>
<feature type="region of interest" description="Disordered" evidence="5">
    <location>
        <begin position="175"/>
        <end position="282"/>
    </location>
</feature>
<feature type="region of interest" description="Involved in PKC-binding" evidence="1">
    <location>
        <begin position="254"/>
        <end position="544"/>
    </location>
</feature>
<feature type="region of interest" description="Disordered" evidence="5">
    <location>
        <begin position="298"/>
        <end position="355"/>
    </location>
</feature>
<feature type="region of interest" description="Disordered" evidence="5">
    <location>
        <begin position="402"/>
        <end position="481"/>
    </location>
</feature>
<feature type="region of interest" description="Disordered" evidence="5">
    <location>
        <begin position="496"/>
        <end position="828"/>
    </location>
</feature>
<feature type="region of interest" description="Disordered" evidence="5">
    <location>
        <begin position="959"/>
        <end position="981"/>
    </location>
</feature>
<feature type="region of interest" description="Disordered" evidence="5">
    <location>
        <begin position="1035"/>
        <end position="1105"/>
    </location>
</feature>
<feature type="region of interest" description="Disordered" evidence="5">
    <location>
        <begin position="1125"/>
        <end position="1221"/>
    </location>
</feature>
<feature type="region of interest" description="Disordered" evidence="5">
    <location>
        <begin position="1277"/>
        <end position="1361"/>
    </location>
</feature>
<feature type="region of interest" description="Disordered" evidence="5">
    <location>
        <begin position="1443"/>
        <end position="1487"/>
    </location>
</feature>
<feature type="region of interest" description="RII-binding" evidence="1">
    <location>
        <begin position="1498"/>
        <end position="1511"/>
    </location>
</feature>
<feature type="region of interest" description="Disordered" evidence="5">
    <location>
        <begin position="1522"/>
        <end position="1582"/>
    </location>
</feature>
<feature type="region of interest" description="Disordered" evidence="5">
    <location>
        <begin position="1599"/>
        <end position="1687"/>
    </location>
</feature>
<feature type="short sequence motif" description="AKAP CaM-binding 1" evidence="4">
    <location>
        <begin position="594"/>
        <end position="614"/>
    </location>
</feature>
<feature type="short sequence motif" description="AKAP CaM-binding 2" evidence="4">
    <location>
        <begin position="743"/>
        <end position="763"/>
    </location>
</feature>
<feature type="short sequence motif" description="AKAP CaM-binding 3" evidence="4">
    <location>
        <begin position="784"/>
        <end position="804"/>
    </location>
</feature>
<feature type="compositionally biased region" description="Low complexity" evidence="5">
    <location>
        <begin position="30"/>
        <end position="48"/>
    </location>
</feature>
<feature type="compositionally biased region" description="Polar residues" evidence="5">
    <location>
        <begin position="52"/>
        <end position="62"/>
    </location>
</feature>
<feature type="compositionally biased region" description="Acidic residues" evidence="5">
    <location>
        <begin position="75"/>
        <end position="88"/>
    </location>
</feature>
<feature type="compositionally biased region" description="Basic and acidic residues" evidence="5">
    <location>
        <begin position="89"/>
        <end position="105"/>
    </location>
</feature>
<feature type="compositionally biased region" description="Basic and acidic residues" evidence="5">
    <location>
        <begin position="213"/>
        <end position="230"/>
    </location>
</feature>
<feature type="compositionally biased region" description="Acidic residues" evidence="5">
    <location>
        <begin position="247"/>
        <end position="259"/>
    </location>
</feature>
<feature type="compositionally biased region" description="Low complexity" evidence="5">
    <location>
        <begin position="268"/>
        <end position="282"/>
    </location>
</feature>
<feature type="compositionally biased region" description="Basic and acidic residues" evidence="5">
    <location>
        <begin position="303"/>
        <end position="321"/>
    </location>
</feature>
<feature type="compositionally biased region" description="Acidic residues" evidence="5">
    <location>
        <begin position="334"/>
        <end position="344"/>
    </location>
</feature>
<feature type="compositionally biased region" description="Low complexity" evidence="5">
    <location>
        <begin position="417"/>
        <end position="426"/>
    </location>
</feature>
<feature type="compositionally biased region" description="Basic and acidic residues" evidence="5">
    <location>
        <begin position="470"/>
        <end position="480"/>
    </location>
</feature>
<feature type="compositionally biased region" description="Low complexity" evidence="5">
    <location>
        <begin position="499"/>
        <end position="513"/>
    </location>
</feature>
<feature type="compositionally biased region" description="Basic residues" evidence="5">
    <location>
        <begin position="514"/>
        <end position="523"/>
    </location>
</feature>
<feature type="compositionally biased region" description="Basic and acidic residues" evidence="5">
    <location>
        <begin position="533"/>
        <end position="550"/>
    </location>
</feature>
<feature type="compositionally biased region" description="Basic and acidic residues" evidence="5">
    <location>
        <begin position="612"/>
        <end position="626"/>
    </location>
</feature>
<feature type="compositionally biased region" description="Polar residues" evidence="5">
    <location>
        <begin position="628"/>
        <end position="639"/>
    </location>
</feature>
<feature type="compositionally biased region" description="Basic and acidic residues" evidence="5">
    <location>
        <begin position="642"/>
        <end position="661"/>
    </location>
</feature>
<feature type="compositionally biased region" description="Basic and acidic residues" evidence="5">
    <location>
        <begin position="697"/>
        <end position="711"/>
    </location>
</feature>
<feature type="compositionally biased region" description="Polar residues" evidence="5">
    <location>
        <begin position="717"/>
        <end position="726"/>
    </location>
</feature>
<feature type="compositionally biased region" description="Low complexity" evidence="5">
    <location>
        <begin position="727"/>
        <end position="744"/>
    </location>
</feature>
<feature type="compositionally biased region" description="Polar residues" evidence="5">
    <location>
        <begin position="1035"/>
        <end position="1045"/>
    </location>
</feature>
<feature type="compositionally biased region" description="Polar residues" evidence="5">
    <location>
        <begin position="1130"/>
        <end position="1157"/>
    </location>
</feature>
<feature type="compositionally biased region" description="Basic and acidic residues" evidence="5">
    <location>
        <begin position="1199"/>
        <end position="1211"/>
    </location>
</feature>
<feature type="compositionally biased region" description="Basic and acidic residues" evidence="5">
    <location>
        <begin position="1298"/>
        <end position="1310"/>
    </location>
</feature>
<feature type="compositionally biased region" description="Basic and acidic residues" evidence="5">
    <location>
        <begin position="1462"/>
        <end position="1487"/>
    </location>
</feature>
<feature type="compositionally biased region" description="Polar residues" evidence="5">
    <location>
        <begin position="1530"/>
        <end position="1547"/>
    </location>
</feature>
<feature type="compositionally biased region" description="Low complexity" evidence="5">
    <location>
        <begin position="1618"/>
        <end position="1630"/>
    </location>
</feature>
<feature type="compositionally biased region" description="Basic and acidic residues" evidence="5">
    <location>
        <begin position="1645"/>
        <end position="1687"/>
    </location>
</feature>
<feature type="modified residue" description="Phosphoserine" evidence="9">
    <location>
        <position position="11"/>
    </location>
</feature>
<feature type="modified residue" description="Phosphoserine" evidence="3">
    <location>
        <position position="18"/>
    </location>
</feature>
<feature type="modified residue" description="Phosphoserine" evidence="3">
    <location>
        <position position="22"/>
    </location>
</feature>
<feature type="modified residue" description="Phosphoserine" evidence="3">
    <location>
        <position position="27"/>
    </location>
</feature>
<feature type="modified residue" description="Phosphoserine" evidence="2">
    <location>
        <position position="136"/>
    </location>
</feature>
<feature type="modified residue" description="Phosphoserine" evidence="2">
    <location>
        <position position="204"/>
    </location>
</feature>
<feature type="modified residue" description="Phosphoserine" evidence="3">
    <location>
        <position position="235"/>
    </location>
</feature>
<feature type="modified residue" description="Phosphoserine" evidence="9">
    <location>
        <position position="245"/>
    </location>
</feature>
<feature type="modified residue" description="Phosphoserine" evidence="9">
    <location>
        <position position="268"/>
    </location>
</feature>
<feature type="modified residue" description="Phosphoserine" evidence="9">
    <location>
        <position position="271"/>
    </location>
</feature>
<feature type="modified residue" description="Phosphoserine" evidence="9">
    <location>
        <position position="274"/>
    </location>
</feature>
<feature type="modified residue" description="Phosphoserine" evidence="9">
    <location>
        <position position="304"/>
    </location>
</feature>
<feature type="modified residue" description="Phosphothreonine" evidence="9">
    <location>
        <position position="331"/>
    </location>
</feature>
<feature type="modified residue" description="Phosphoserine" evidence="9">
    <location>
        <position position="335"/>
    </location>
</feature>
<feature type="modified residue" description="Phosphoserine" evidence="9">
    <location>
        <position position="350"/>
    </location>
</feature>
<feature type="modified residue" description="Phosphotyrosine" evidence="3">
    <location>
        <position position="353"/>
    </location>
</feature>
<feature type="modified residue" description="Phosphoserine" evidence="3">
    <location>
        <position position="371"/>
    </location>
</feature>
<feature type="modified residue" description="Phosphoserine" evidence="9">
    <location>
        <position position="469"/>
    </location>
</feature>
<feature type="modified residue" description="Phosphoserine" evidence="9">
    <location>
        <position position="491"/>
    </location>
</feature>
<feature type="modified residue" description="Phosphoserine" evidence="9">
    <location>
        <position position="507"/>
    </location>
</feature>
<feature type="modified residue" description="Phosphoserine" evidence="9">
    <location>
        <position position="509"/>
    </location>
</feature>
<feature type="modified residue" description="Phosphoserine" evidence="9">
    <location>
        <position position="541"/>
    </location>
</feature>
<feature type="modified residue" description="Phosphoserine" evidence="9">
    <location>
        <position position="544"/>
    </location>
</feature>
<feature type="modified residue" description="Phosphoserine" evidence="9">
    <location>
        <position position="585"/>
    </location>
</feature>
<feature type="modified residue" description="Phosphoserine" evidence="9">
    <location>
        <position position="599"/>
    </location>
</feature>
<feature type="modified residue" description="Phosphoserine" evidence="9">
    <location>
        <position position="614"/>
    </location>
</feature>
<feature type="modified residue" description="Phosphoserine" evidence="2">
    <location>
        <position position="616"/>
    </location>
</feature>
<feature type="modified residue" description="Phosphothreonine" evidence="9">
    <location>
        <position position="629"/>
    </location>
</feature>
<feature type="modified residue" description="Phosphoserine" evidence="9">
    <location>
        <position position="631"/>
    </location>
</feature>
<feature type="modified residue" description="Phosphoserine" evidence="2">
    <location>
        <position position="632"/>
    </location>
</feature>
<feature type="modified residue" description="Phosphoserine" evidence="9">
    <location>
        <position position="635"/>
    </location>
</feature>
<feature type="modified residue" description="Phosphoserine" evidence="9">
    <location>
        <position position="638"/>
    </location>
</feature>
<feature type="modified residue" description="Phosphoserine" evidence="9">
    <location>
        <position position="683"/>
    </location>
</feature>
<feature type="modified residue" description="Phosphoserine" evidence="2">
    <location>
        <position position="684"/>
    </location>
</feature>
<feature type="modified residue" description="Phosphoserine" evidence="2">
    <location>
        <position position="685"/>
    </location>
</feature>
<feature type="modified residue" description="Phosphoserine" evidence="9">
    <location>
        <position position="736"/>
    </location>
</feature>
<feature type="modified residue" description="Phosphoserine" evidence="2">
    <location>
        <position position="748"/>
    </location>
</feature>
<feature type="modified residue" description="Phosphoserine" evidence="9">
    <location>
        <position position="770"/>
    </location>
</feature>
<feature type="modified residue" description="Phosphoserine" evidence="9">
    <location>
        <position position="771"/>
    </location>
</feature>
<feature type="modified residue" description="Phosphoserine" evidence="3">
    <location>
        <position position="789"/>
    </location>
</feature>
<feature type="modified residue" description="Phosphothreonine" evidence="3">
    <location>
        <position position="871"/>
    </location>
</feature>
<feature type="modified residue" description="Phosphoserine" evidence="3">
    <location>
        <position position="873"/>
    </location>
</feature>
<feature type="modified residue" description="Phosphoserine" evidence="9">
    <location>
        <position position="1059"/>
    </location>
</feature>
<feature type="modified residue" description="Phosphoserine" evidence="2">
    <location>
        <position position="1289"/>
    </location>
</feature>
<feature type="modified residue" description="Phosphoserine" evidence="9">
    <location>
        <position position="1348"/>
    </location>
</feature>
<feature type="modified residue" description="Phosphoserine" evidence="9">
    <location>
        <position position="1352"/>
    </location>
</feature>
<feature type="modified residue" description="Phosphoserine" evidence="9">
    <location>
        <position position="1354"/>
    </location>
</feature>
<feature type="modified residue" description="Phosphoserine" evidence="2">
    <location>
        <position position="1543"/>
    </location>
</feature>
<feature type="modified residue" description="Phosphoserine" evidence="9">
    <location>
        <position position="1571"/>
    </location>
</feature>
<feature type="modified residue" description="Phosphoserine" evidence="3">
    <location>
        <position position="1637"/>
    </location>
</feature>
<feature type="lipid moiety-binding region" description="N-myristoyl glycine" evidence="2">
    <location>
        <position position="2"/>
    </location>
</feature>
<feature type="cross-link" description="Glycyl lysine isopeptide (Lys-Gly) (interchain with G-Cter in SUMO1)" evidence="2">
    <location>
        <position position="1030"/>
    </location>
</feature>
<feature type="splice variant" id="VSP_028136" description="In isoform 3." evidence="7">
    <location>
        <begin position="1"/>
        <end position="105"/>
    </location>
</feature>
<feature type="splice variant" id="VSP_028137" description="In isoform 2." evidence="7">
    <location>
        <begin position="1"/>
        <end position="80"/>
    </location>
</feature>
<feature type="splice variant" id="VSP_028138" description="In isoform 2." evidence="7">
    <original>EEEVVDED</original>
    <variation>MLGTITIT</variation>
    <location>
        <begin position="81"/>
        <end position="88"/>
    </location>
</feature>
<feature type="sequence conflict" description="In Ref. 1; AAD03788." evidence="8" ref="1">
    <original>T</original>
    <variation>S</variation>
    <location>
        <position position="60"/>
    </location>
</feature>
<feature type="sequence conflict" description="In Ref. 1; AAD03788." evidence="8" ref="1">
    <original>S</original>
    <variation>N</variation>
    <location>
        <position position="136"/>
    </location>
</feature>
<feature type="sequence conflict" description="In Ref. 1; AAD03788." evidence="8" ref="1">
    <original>S</original>
    <variation>N</variation>
    <location>
        <position position="277"/>
    </location>
</feature>
<feature type="sequence conflict" description="In Ref. 1; AAD03788." evidence="8" ref="1">
    <original>G</original>
    <variation>S</variation>
    <location>
        <position position="1006"/>
    </location>
</feature>
<feature type="sequence conflict" description="In Ref. 1; AAD03788." evidence="8" ref="1">
    <original>A</original>
    <variation>T</variation>
    <location>
        <position position="1219"/>
    </location>
</feature>
<feature type="sequence conflict" description="In Ref. 1; AAD03788." evidence="8" ref="1">
    <original>A</original>
    <variation>R</variation>
    <location>
        <position position="1651"/>
    </location>
</feature>
<name>AKA12_RAT</name>
<proteinExistence type="evidence at protein level"/>
<protein>
    <recommendedName>
        <fullName>A-kinase anchor protein 12</fullName>
        <shortName>AKAP-12</shortName>
    </recommendedName>
</protein>
<dbReference type="EMBL" id="U41453">
    <property type="protein sequence ID" value="AAD03788.1"/>
    <property type="status" value="ALT_FRAME"/>
    <property type="molecule type" value="mRNA"/>
</dbReference>
<dbReference type="EMBL" id="AY695056">
    <property type="protein sequence ID" value="AAV84358.1"/>
    <property type="molecule type" value="mRNA"/>
</dbReference>
<dbReference type="EMBL" id="AY695057">
    <property type="protein sequence ID" value="AAV84359.1"/>
    <property type="molecule type" value="mRNA"/>
</dbReference>
<dbReference type="EMBL" id="AY695058">
    <property type="protein sequence ID" value="AAV84360.1"/>
    <property type="molecule type" value="mRNA"/>
</dbReference>
<dbReference type="RefSeq" id="NP_001028825.1">
    <molecule id="Q5QD51-2"/>
    <property type="nucleotide sequence ID" value="NM_001033653.1"/>
</dbReference>
<dbReference type="RefSeq" id="NP_476444.2">
    <molecule id="Q5QD51-1"/>
    <property type="nucleotide sequence ID" value="NM_057103.2"/>
</dbReference>
<dbReference type="RefSeq" id="XP_006227910.1">
    <molecule id="Q5QD51-3"/>
    <property type="nucleotide sequence ID" value="XM_006227848.5"/>
</dbReference>
<dbReference type="SMR" id="Q5QD51"/>
<dbReference type="BioGRID" id="249703">
    <property type="interactions" value="2"/>
</dbReference>
<dbReference type="FunCoup" id="Q5QD51">
    <property type="interactions" value="750"/>
</dbReference>
<dbReference type="IntAct" id="Q5QD51">
    <property type="interactions" value="1"/>
</dbReference>
<dbReference type="MINT" id="Q5QD51"/>
<dbReference type="STRING" id="10116.ENSRNOP00000057494"/>
<dbReference type="iPTMnet" id="Q5QD51"/>
<dbReference type="PhosphoSitePlus" id="Q5QD51"/>
<dbReference type="PaxDb" id="10116-ENSRNOP00000057494"/>
<dbReference type="Ensembl" id="ENSRNOT00000060767.5">
    <molecule id="Q5QD51-1"/>
    <property type="protein sequence ID" value="ENSRNOP00000057494.2"/>
    <property type="gene ID" value="ENSRNOG00000019549.9"/>
</dbReference>
<dbReference type="Ensembl" id="ENSRNOT00000083702.2">
    <molecule id="Q5QD51-2"/>
    <property type="protein sequence ID" value="ENSRNOP00000070062.1"/>
    <property type="gene ID" value="ENSRNOG00000019549.9"/>
</dbReference>
<dbReference type="Ensembl" id="ENSRNOT00000099245.1">
    <molecule id="Q5QD51-3"/>
    <property type="protein sequence ID" value="ENSRNOP00000087138.1"/>
    <property type="gene ID" value="ENSRNOG00000019549.9"/>
</dbReference>
<dbReference type="GeneID" id="83425"/>
<dbReference type="KEGG" id="rno:83425"/>
<dbReference type="UCSC" id="RGD:70988">
    <molecule id="Q5QD51-1"/>
    <property type="organism name" value="rat"/>
</dbReference>
<dbReference type="AGR" id="RGD:70988"/>
<dbReference type="CTD" id="9590"/>
<dbReference type="RGD" id="70988">
    <property type="gene designation" value="Akap12"/>
</dbReference>
<dbReference type="eggNOG" id="ENOG502RDV6">
    <property type="taxonomic scope" value="Eukaryota"/>
</dbReference>
<dbReference type="GeneTree" id="ENSGT00730000111244"/>
<dbReference type="HOGENOM" id="CLU_002691_0_0_1"/>
<dbReference type="InParanoid" id="Q5QD51"/>
<dbReference type="OMA" id="SFTEPAW"/>
<dbReference type="OrthoDB" id="8931760at2759"/>
<dbReference type="PhylomeDB" id="Q5QD51"/>
<dbReference type="TreeFam" id="TF105411"/>
<dbReference type="Reactome" id="R-RNO-9013405">
    <property type="pathway name" value="RHOD GTPase cycle"/>
</dbReference>
<dbReference type="Reactome" id="R-RNO-9035034">
    <property type="pathway name" value="RHOF GTPase cycle"/>
</dbReference>
<dbReference type="PRO" id="PR:Q5QD51"/>
<dbReference type="Proteomes" id="UP000002494">
    <property type="component" value="Chromosome 1"/>
</dbReference>
<dbReference type="Bgee" id="ENSRNOG00000019549">
    <property type="expression patterns" value="Expressed in testis and 19 other cell types or tissues"/>
</dbReference>
<dbReference type="GO" id="GO:0005737">
    <property type="term" value="C:cytoplasm"/>
    <property type="evidence" value="ECO:0000318"/>
    <property type="project" value="GO_Central"/>
</dbReference>
<dbReference type="GO" id="GO:0005856">
    <property type="term" value="C:cytoskeleton"/>
    <property type="evidence" value="ECO:0007669"/>
    <property type="project" value="UniProtKB-SubCell"/>
</dbReference>
<dbReference type="GO" id="GO:0005829">
    <property type="term" value="C:cytosol"/>
    <property type="evidence" value="ECO:0007669"/>
    <property type="project" value="Ensembl"/>
</dbReference>
<dbReference type="GO" id="GO:0043025">
    <property type="term" value="C:neuronal cell body"/>
    <property type="evidence" value="ECO:0000314"/>
    <property type="project" value="RGD"/>
</dbReference>
<dbReference type="GO" id="GO:0005886">
    <property type="term" value="C:plasma membrane"/>
    <property type="evidence" value="ECO:0007669"/>
    <property type="project" value="Ensembl"/>
</dbReference>
<dbReference type="GO" id="GO:0098685">
    <property type="term" value="C:Schaffer collateral - CA1 synapse"/>
    <property type="evidence" value="ECO:0000266"/>
    <property type="project" value="RGD"/>
</dbReference>
<dbReference type="GO" id="GO:0008179">
    <property type="term" value="F:adenylate cyclase binding"/>
    <property type="evidence" value="ECO:0000266"/>
    <property type="project" value="RGD"/>
</dbReference>
<dbReference type="GO" id="GO:0005516">
    <property type="term" value="F:calmodulin binding"/>
    <property type="evidence" value="ECO:0007669"/>
    <property type="project" value="UniProtKB-KW"/>
</dbReference>
<dbReference type="GO" id="GO:0051018">
    <property type="term" value="F:protein kinase A binding"/>
    <property type="evidence" value="ECO:0007669"/>
    <property type="project" value="InterPro"/>
</dbReference>
<dbReference type="GO" id="GO:0007193">
    <property type="term" value="P:adenylate cyclase-inhibiting G protein-coupled receptor signaling pathway"/>
    <property type="evidence" value="ECO:0000266"/>
    <property type="project" value="RGD"/>
</dbReference>
<dbReference type="GO" id="GO:0071347">
    <property type="term" value="P:cellular response to interleukin-1"/>
    <property type="evidence" value="ECO:0000270"/>
    <property type="project" value="RGD"/>
</dbReference>
<dbReference type="GO" id="GO:0071356">
    <property type="term" value="P:cellular response to tumor necrosis factor"/>
    <property type="evidence" value="ECO:0000270"/>
    <property type="project" value="RGD"/>
</dbReference>
<dbReference type="GO" id="GO:0035733">
    <property type="term" value="P:hepatic stellate cell activation"/>
    <property type="evidence" value="ECO:0000270"/>
    <property type="project" value="RGD"/>
</dbReference>
<dbReference type="GO" id="GO:0050804">
    <property type="term" value="P:modulation of chemical synaptic transmission"/>
    <property type="evidence" value="ECO:0000266"/>
    <property type="project" value="RGD"/>
</dbReference>
<dbReference type="GO" id="GO:0043116">
    <property type="term" value="P:negative regulation of vascular permeability"/>
    <property type="evidence" value="ECO:0000315"/>
    <property type="project" value="RGD"/>
</dbReference>
<dbReference type="GO" id="GO:0070374">
    <property type="term" value="P:positive regulation of ERK1 and ERK2 cascade"/>
    <property type="evidence" value="ECO:0000315"/>
    <property type="project" value="RGD"/>
</dbReference>
<dbReference type="GO" id="GO:0061870">
    <property type="term" value="P:positive regulation of hepatic stellate cell migration"/>
    <property type="evidence" value="ECO:0000315"/>
    <property type="project" value="RGD"/>
</dbReference>
<dbReference type="GO" id="GO:1900143">
    <property type="term" value="P:positive regulation of oligodendrocyte apoptotic process"/>
    <property type="evidence" value="ECO:0000315"/>
    <property type="project" value="RGD"/>
</dbReference>
<dbReference type="GO" id="GO:0010739">
    <property type="term" value="P:positive regulation of protein kinase A signaling"/>
    <property type="evidence" value="ECO:0007669"/>
    <property type="project" value="InterPro"/>
</dbReference>
<dbReference type="GO" id="GO:0032760">
    <property type="term" value="P:positive regulation of tumor necrosis factor production"/>
    <property type="evidence" value="ECO:0000315"/>
    <property type="project" value="RGD"/>
</dbReference>
<dbReference type="GO" id="GO:0010738">
    <property type="term" value="P:regulation of protein kinase A signaling"/>
    <property type="evidence" value="ECO:0000266"/>
    <property type="project" value="RGD"/>
</dbReference>
<dbReference type="GO" id="GO:0090036">
    <property type="term" value="P:regulation of protein kinase C signaling"/>
    <property type="evidence" value="ECO:0007669"/>
    <property type="project" value="InterPro"/>
</dbReference>
<dbReference type="GO" id="GO:0051602">
    <property type="term" value="P:response to electrical stimulus"/>
    <property type="evidence" value="ECO:0000270"/>
    <property type="project" value="RGD"/>
</dbReference>
<dbReference type="GO" id="GO:0032496">
    <property type="term" value="P:response to lipopolysaccharide"/>
    <property type="evidence" value="ECO:0000270"/>
    <property type="project" value="RGD"/>
</dbReference>
<dbReference type="GO" id="GO:0007165">
    <property type="term" value="P:signal transduction"/>
    <property type="evidence" value="ECO:0000318"/>
    <property type="project" value="GO_Central"/>
</dbReference>
<dbReference type="InterPro" id="IPR028540">
    <property type="entry name" value="AKAP12"/>
</dbReference>
<dbReference type="InterPro" id="IPR001573">
    <property type="entry name" value="AKAP_WSK"/>
</dbReference>
<dbReference type="PANTHER" id="PTHR23209">
    <property type="entry name" value="A-KINASE ANCHOR PROTEIN 12"/>
    <property type="match status" value="1"/>
</dbReference>
<dbReference type="PANTHER" id="PTHR23209:SF4">
    <property type="entry name" value="A-KINASE ANCHOR PROTEIN 12"/>
    <property type="match status" value="1"/>
</dbReference>
<dbReference type="Pfam" id="PF03832">
    <property type="entry name" value="WSK"/>
    <property type="match status" value="3"/>
</dbReference>
<dbReference type="PROSITE" id="PS51893">
    <property type="entry name" value="AKAP_CAM_BD"/>
    <property type="match status" value="3"/>
</dbReference>
<organism>
    <name type="scientific">Rattus norvegicus</name>
    <name type="common">Rat</name>
    <dbReference type="NCBI Taxonomy" id="10116"/>
    <lineage>
        <taxon>Eukaryota</taxon>
        <taxon>Metazoa</taxon>
        <taxon>Chordata</taxon>
        <taxon>Craniata</taxon>
        <taxon>Vertebrata</taxon>
        <taxon>Euteleostomi</taxon>
        <taxon>Mammalia</taxon>
        <taxon>Eutheria</taxon>
        <taxon>Euarchontoglires</taxon>
        <taxon>Glires</taxon>
        <taxon>Rodentia</taxon>
        <taxon>Myomorpha</taxon>
        <taxon>Muroidea</taxon>
        <taxon>Muridae</taxon>
        <taxon>Murinae</taxon>
        <taxon>Rattus</taxon>
    </lineage>
</organism>
<evidence type="ECO:0000250" key="1"/>
<evidence type="ECO:0000250" key="2">
    <source>
        <dbReference type="UniProtKB" id="Q02952"/>
    </source>
</evidence>
<evidence type="ECO:0000250" key="3">
    <source>
        <dbReference type="UniProtKB" id="Q9WTQ5"/>
    </source>
</evidence>
<evidence type="ECO:0000255" key="4">
    <source>
        <dbReference type="PROSITE-ProRule" id="PRU01241"/>
    </source>
</evidence>
<evidence type="ECO:0000256" key="5">
    <source>
        <dbReference type="SAM" id="MobiDB-lite"/>
    </source>
</evidence>
<evidence type="ECO:0000269" key="6">
    <source>
    </source>
</evidence>
<evidence type="ECO:0000303" key="7">
    <source>
    </source>
</evidence>
<evidence type="ECO:0000305" key="8"/>
<evidence type="ECO:0007744" key="9">
    <source>
    </source>
</evidence>
<keyword id="KW-0025">Alternative splicing</keyword>
<keyword id="KW-0112">Calmodulin-binding</keyword>
<keyword id="KW-0963">Cytoplasm</keyword>
<keyword id="KW-0206">Cytoskeleton</keyword>
<keyword id="KW-1017">Isopeptide bond</keyword>
<keyword id="KW-0449">Lipoprotein</keyword>
<keyword id="KW-0472">Membrane</keyword>
<keyword id="KW-0519">Myristate</keyword>
<keyword id="KW-0597">Phosphoprotein</keyword>
<keyword id="KW-1185">Reference proteome</keyword>
<keyword id="KW-0677">Repeat</keyword>
<keyword id="KW-0832">Ubl conjugation</keyword>
<comment type="function">
    <text evidence="1">Anchoring protein that mediates the subcellular compartmentation of protein kinase A (PKA) and protein kinase C (PKC).</text>
</comment>
<comment type="subunit">
    <text evidence="1">Binds to dimeric RII-alpha regulatory subunit of PKC.</text>
</comment>
<comment type="subcellular location">
    <subcellularLocation>
        <location evidence="1">Cytoplasm</location>
        <location evidence="1">Cytoskeleton</location>
    </subcellularLocation>
    <subcellularLocation>
        <location evidence="2">Membrane</location>
        <topology evidence="2">Lipid-anchor</topology>
    </subcellularLocation>
</comment>
<comment type="alternative products">
    <event type="alternative splicing"/>
    <isoform>
        <id>Q5QD51-1</id>
        <name>1</name>
        <name>Alpha</name>
        <sequence type="displayed"/>
    </isoform>
    <isoform>
        <id>Q5QD51-2</id>
        <name>2</name>
        <name>Beta</name>
        <sequence type="described" ref="VSP_028137 VSP_028138"/>
    </isoform>
    <isoform>
        <id>Q5QD51-3</id>
        <name>3</name>
        <name>Gamma</name>
        <sequence type="described" ref="VSP_028136"/>
    </isoform>
</comment>
<comment type="PTM">
    <text evidence="6">Phosphorylated by PKC (in vitro).</text>
</comment>
<comment type="sequence caution" evidence="8">
    <conflict type="frameshift">
        <sequence resource="EMBL-CDS" id="AAD03788"/>
    </conflict>
</comment>
<gene>
    <name type="primary">Akap12</name>
</gene>
<sequence length="1687" mass="181110">MGAGSSTEQRSPEQPAGSDTPSELVLSGHGPAAEASGAAGDPADADPATKLPQKNGQLSTVNGVAEQGDVHVQEENQEGQEEEVVDEDVGQRESEDVREKDRVEEMAANSTAVEDITKDGQEETSEIIEQIPASESNVEEMVQPAESQANDVGFKKVFKFVGFKFTVKKDKNEKSDTVQLLTVKKDEGEGAEASVGAGDHQEPSVETAVGESASKESELKQSTEKQEGTLKQEQSSTEIPLQAESDQAAEEEAKDEGEEKQEKEPTKSPESPSSPVSSETTSSFKKFFTHGWAGWRKKTSFKKSKEDDLETAEKRKEQEAEKVDEEEKEKTEPASEEQEPAEDTDQARLSADYEKVELPLEDQVGDLEASSEEKCAPLATEVFDEKMEAHQEVVAEVHVSTVEKTEEEQGGGGEAEGGVVVEGTGESLPPEKLAEPQEVPQEAEPAEELMKSREMCVSGGDHTQLTDLSPEEKTLPKHPEGIVSEVEMLSSQERIKVQGSPLKKLFSSSGLKKLSGKKQKGKRGGGGDEEPGEYQHIHTESPESADEQKGESSASSPEEPEETTCLEKGPLEAPQDGEAEEGTTSDGEKKREGITPWASFKKMVTPKKRVRRPSESDKEEELEKVKSATLSSTDSTVSEMQDEVKTVGEEQKPEEPKRRVDTSVSWEALICVGSSKKRARKASSSDDEGGPRTLGGDSHRAEEASKDKEAGTDAVPASTQEQDQAQGSSSPEPAGSPSEGEGVSTWESFKRLVTPRKKSKSKLEEKAEDSSVEQLSTEIEPSREESWVSIKKFIPGRRKKRADGKQEQATVEDSGPVEINEDDPDVPAVVPLSEYDAVEREKMEAQGNAELPQLLGAVYVSEELSKTLVHTVSVAVIDGTRAVTSVEERSPSWISASVTEPLEHTAGEAMPPVEEVTEKDIIAEETPVLTQTLPEGKDAHDDMVTSEVDFTSEAVTATETSEALRTEEVTEASGAEETTDMVSAVSQLTDSPDTTEEATPVQEVEGGVLDTEEEERQTQAILQAVADKVKEESQVPATQTVQRTGSKALEKVEEVEEDSEVLASEKEKDVMPKGPVQEAGAEHLAQGSETGQATPESLEVPEVTADVDHVATCQVIKLQQLMEQAVAPESSETLTDSETNGSTPLADSDTADGTQQDETIDSQDSKATAAVRQSQVTEEEAATAQKEEPSTLPNNVPAQEEHGEEPGRDVLEPTQQELAAAAVPVLAKTEVGQEGEVDWLDGEKVKEEQEVFVHSGPNSQKAADVTYDSEVMGVAGCQEKESTEVQSLSLEEGEMETDVEKEKRETKPEQVSEEGEQETAAPEHEGTYGKPVLTLDMPSSERGKALGSLGGSPSLPDQDKAGCIEVQVQSLDTTVTQTAEAVEKVIETVVISETGESPECVGAHLLPAEKSSATGGHWTLQHAEDTVPLGPESQAESIPIIVTPAPESTLHPDLQGEISASQRERSEEEDKPDAGPDADGKESTAIEKVLKAEPEILELESKSNKIVLNVIQTAVDQFARTETAPETHAYDSQTQVPAMQADSQGAQQMLDKNESCQDETPSAAAQRGLASPDRSGGMGSASEMLAALAVESAGVKVSIEKLPPQPKDQKEHAADGPQLQSLAQAEASASGNLTKESPDTNGPKLTEEGDAPKVEVQEEEMSTKSVKENKAQAEEDLQEPKGDLAES</sequence>
<accession>Q5QD51</accession>
<accession>Q5QD49</accession>
<accession>Q5QD50</accession>
<accession>Q9Z1F7</accession>